<reference key="1">
    <citation type="journal article" date="2003" name="Nature">
        <title>The DNA sequence and analysis of human chromosome 6.</title>
        <authorList>
            <person name="Mungall A.J."/>
            <person name="Palmer S.A."/>
            <person name="Sims S.K."/>
            <person name="Edwards C.A."/>
            <person name="Ashurst J.L."/>
            <person name="Wilming L."/>
            <person name="Jones M.C."/>
            <person name="Horton R."/>
            <person name="Hunt S.E."/>
            <person name="Scott C.E."/>
            <person name="Gilbert J.G.R."/>
            <person name="Clamp M.E."/>
            <person name="Bethel G."/>
            <person name="Milne S."/>
            <person name="Ainscough R."/>
            <person name="Almeida J.P."/>
            <person name="Ambrose K.D."/>
            <person name="Andrews T.D."/>
            <person name="Ashwell R.I.S."/>
            <person name="Babbage A.K."/>
            <person name="Bagguley C.L."/>
            <person name="Bailey J."/>
            <person name="Banerjee R."/>
            <person name="Barker D.J."/>
            <person name="Barlow K.F."/>
            <person name="Bates K."/>
            <person name="Beare D.M."/>
            <person name="Beasley H."/>
            <person name="Beasley O."/>
            <person name="Bird C.P."/>
            <person name="Blakey S.E."/>
            <person name="Bray-Allen S."/>
            <person name="Brook J."/>
            <person name="Brown A.J."/>
            <person name="Brown J.Y."/>
            <person name="Burford D.C."/>
            <person name="Burrill W."/>
            <person name="Burton J."/>
            <person name="Carder C."/>
            <person name="Carter N.P."/>
            <person name="Chapman J.C."/>
            <person name="Clark S.Y."/>
            <person name="Clark G."/>
            <person name="Clee C.M."/>
            <person name="Clegg S."/>
            <person name="Cobley V."/>
            <person name="Collier R.E."/>
            <person name="Collins J.E."/>
            <person name="Colman L.K."/>
            <person name="Corby N.R."/>
            <person name="Coville G.J."/>
            <person name="Culley K.M."/>
            <person name="Dhami P."/>
            <person name="Davies J."/>
            <person name="Dunn M."/>
            <person name="Earthrowl M.E."/>
            <person name="Ellington A.E."/>
            <person name="Evans K.A."/>
            <person name="Faulkner L."/>
            <person name="Francis M.D."/>
            <person name="Frankish A."/>
            <person name="Frankland J."/>
            <person name="French L."/>
            <person name="Garner P."/>
            <person name="Garnett J."/>
            <person name="Ghori M.J."/>
            <person name="Gilby L.M."/>
            <person name="Gillson C.J."/>
            <person name="Glithero R.J."/>
            <person name="Grafham D.V."/>
            <person name="Grant M."/>
            <person name="Gribble S."/>
            <person name="Griffiths C."/>
            <person name="Griffiths M.N.D."/>
            <person name="Hall R."/>
            <person name="Halls K.S."/>
            <person name="Hammond S."/>
            <person name="Harley J.L."/>
            <person name="Hart E.A."/>
            <person name="Heath P.D."/>
            <person name="Heathcott R."/>
            <person name="Holmes S.J."/>
            <person name="Howden P.J."/>
            <person name="Howe K.L."/>
            <person name="Howell G.R."/>
            <person name="Huckle E."/>
            <person name="Humphray S.J."/>
            <person name="Humphries M.D."/>
            <person name="Hunt A.R."/>
            <person name="Johnson C.M."/>
            <person name="Joy A.A."/>
            <person name="Kay M."/>
            <person name="Keenan S.J."/>
            <person name="Kimberley A.M."/>
            <person name="King A."/>
            <person name="Laird G.K."/>
            <person name="Langford C."/>
            <person name="Lawlor S."/>
            <person name="Leongamornlert D.A."/>
            <person name="Leversha M."/>
            <person name="Lloyd C.R."/>
            <person name="Lloyd D.M."/>
            <person name="Loveland J.E."/>
            <person name="Lovell J."/>
            <person name="Martin S."/>
            <person name="Mashreghi-Mohammadi M."/>
            <person name="Maslen G.L."/>
            <person name="Matthews L."/>
            <person name="McCann O.T."/>
            <person name="McLaren S.J."/>
            <person name="McLay K."/>
            <person name="McMurray A."/>
            <person name="Moore M.J.F."/>
            <person name="Mullikin J.C."/>
            <person name="Niblett D."/>
            <person name="Nickerson T."/>
            <person name="Novik K.L."/>
            <person name="Oliver K."/>
            <person name="Overton-Larty E.K."/>
            <person name="Parker A."/>
            <person name="Patel R."/>
            <person name="Pearce A.V."/>
            <person name="Peck A.I."/>
            <person name="Phillimore B.J.C.T."/>
            <person name="Phillips S."/>
            <person name="Plumb R.W."/>
            <person name="Porter K.M."/>
            <person name="Ramsey Y."/>
            <person name="Ranby S.A."/>
            <person name="Rice C.M."/>
            <person name="Ross M.T."/>
            <person name="Searle S.M."/>
            <person name="Sehra H.K."/>
            <person name="Sheridan E."/>
            <person name="Skuce C.D."/>
            <person name="Smith S."/>
            <person name="Smith M."/>
            <person name="Spraggon L."/>
            <person name="Squares S.L."/>
            <person name="Steward C.A."/>
            <person name="Sycamore N."/>
            <person name="Tamlyn-Hall G."/>
            <person name="Tester J."/>
            <person name="Theaker A.J."/>
            <person name="Thomas D.W."/>
            <person name="Thorpe A."/>
            <person name="Tracey A."/>
            <person name="Tromans A."/>
            <person name="Tubby B."/>
            <person name="Wall M."/>
            <person name="Wallis J.M."/>
            <person name="West A.P."/>
            <person name="White S.S."/>
            <person name="Whitehead S.L."/>
            <person name="Whittaker H."/>
            <person name="Wild A."/>
            <person name="Willey D.J."/>
            <person name="Wilmer T.E."/>
            <person name="Wood J.M."/>
            <person name="Wray P.W."/>
            <person name="Wyatt J.C."/>
            <person name="Young L."/>
            <person name="Younger R.M."/>
            <person name="Bentley D.R."/>
            <person name="Coulson A."/>
            <person name="Durbin R.M."/>
            <person name="Hubbard T."/>
            <person name="Sulston J.E."/>
            <person name="Dunham I."/>
            <person name="Rogers J."/>
            <person name="Beck S."/>
        </authorList>
    </citation>
    <scope>NUCLEOTIDE SEQUENCE [LARGE SCALE GENOMIC DNA]</scope>
</reference>
<reference key="2">
    <citation type="submission" date="2005-09" db="EMBL/GenBank/DDBJ databases">
        <authorList>
            <person name="Mural R.J."/>
            <person name="Istrail S."/>
            <person name="Sutton G.G."/>
            <person name="Florea L."/>
            <person name="Halpern A.L."/>
            <person name="Mobarry C.M."/>
            <person name="Lippert R."/>
            <person name="Walenz B."/>
            <person name="Shatkay H."/>
            <person name="Dew I."/>
            <person name="Miller J.R."/>
            <person name="Flanigan M.J."/>
            <person name="Edwards N.J."/>
            <person name="Bolanos R."/>
            <person name="Fasulo D."/>
            <person name="Halldorsson B.V."/>
            <person name="Hannenhalli S."/>
            <person name="Turner R."/>
            <person name="Yooseph S."/>
            <person name="Lu F."/>
            <person name="Nusskern D.R."/>
            <person name="Shue B.C."/>
            <person name="Zheng X.H."/>
            <person name="Zhong F."/>
            <person name="Delcher A.L."/>
            <person name="Huson D.H."/>
            <person name="Kravitz S.A."/>
            <person name="Mouchard L."/>
            <person name="Reinert K."/>
            <person name="Remington K.A."/>
            <person name="Clark A.G."/>
            <person name="Waterman M.S."/>
            <person name="Eichler E.E."/>
            <person name="Adams M.D."/>
            <person name="Hunkapiller M.W."/>
            <person name="Myers E.W."/>
            <person name="Venter J.C."/>
        </authorList>
    </citation>
    <scope>NUCLEOTIDE SEQUENCE [LARGE SCALE GENOMIC DNA]</scope>
</reference>
<reference key="3">
    <citation type="journal article" date="2004" name="Genome Res.">
        <title>The status, quality, and expansion of the NIH full-length cDNA project: the Mammalian Gene Collection (MGC).</title>
        <authorList>
            <consortium name="The MGC Project Team"/>
        </authorList>
    </citation>
    <scope>NUCLEOTIDE SEQUENCE [LARGE SCALE MRNA] (ISOFORM 1)</scope>
    <source>
        <tissue>Urinary bladder</tissue>
    </source>
</reference>
<reference key="4">
    <citation type="journal article" date="2003" name="Nature">
        <title>Proteomic characterization of the human centrosome by protein correlation profiling.</title>
        <authorList>
            <person name="Andersen J.S."/>
            <person name="Wilkinson C.J."/>
            <person name="Mayor T."/>
            <person name="Mortensen P."/>
            <person name="Nigg E.A."/>
            <person name="Mann M."/>
        </authorList>
    </citation>
    <scope>IDENTIFICATION BY MASS SPECTROMETRY</scope>
    <scope>SUBCELLULAR LOCATION [LARGE SCALE ANALYSIS]</scope>
    <source>
        <tissue>Lymphoblast</tissue>
    </source>
</reference>
<reference key="5">
    <citation type="journal article" date="2008" name="Biochem. J.">
        <title>Cep57, a multidomain protein with unique microtubule and centrosomal localization domains.</title>
        <authorList>
            <person name="Momotani K."/>
            <person name="Khromov A.S."/>
            <person name="Miyake T."/>
            <person name="Stukenberg P.T."/>
            <person name="Somlyo A.V."/>
        </authorList>
    </citation>
    <scope>IDENTIFICATION</scope>
</reference>
<reference key="6">
    <citation type="journal article" date="2013" name="J. Proteome Res.">
        <title>Toward a comprehensive characterization of a human cancer cell phosphoproteome.</title>
        <authorList>
            <person name="Zhou H."/>
            <person name="Di Palma S."/>
            <person name="Preisinger C."/>
            <person name="Peng M."/>
            <person name="Polat A.N."/>
            <person name="Heck A.J."/>
            <person name="Mohammed S."/>
        </authorList>
    </citation>
    <scope>PHOSPHORYLATION [LARGE SCALE ANALYSIS] AT SER-49</scope>
    <scope>IDENTIFICATION BY MASS SPECTROMETRY [LARGE SCALE ANALYSIS]</scope>
    <source>
        <tissue>Erythroleukemia</tissue>
    </source>
</reference>
<sequence>MDSELMHSIVGSYHKPPERVFVPSFTQNEPSQNCHPANLEVTSPKILHSPNSQALILALKTLQEKIHRLELERTQAEDNLNILSREAAQYKKALENETNERNLAHQELIKQKKDISIQLSSAQSRCTLLEKQLEYTKRMVLNVEREKNMILEQQAQLQREKEQDQMKLYAKLEKLDVLEKECFRLTTTQKTAEDKIKHLEEKLKEEEHQRKLFQDKASELQTGLEISKIIMSSVSNLKHSKEKKKSSKKTKCIKRRPPWQICSKFGALPFVAEKMRQHRDPHILQKPFNVTETRCLPKPSRTTSWCKAIPPDSEKSISICDNLSELLMAMQDELDQMSMEHQELLKQMKETESHSVCDDIECELECLLKKMEIKGEQISKLKKHQDSVCKLQQKVQNSKMSEASGIQQEDSYPKGSKNIKNSPRKCLTDTNLFQKNSSFHPIRVHNLQMKLRRDDIMWEQ</sequence>
<gene>
    <name type="primary">CEP57L1</name>
    <name type="synonym">C6orf182</name>
    <name type="synonym">CEP57R</name>
</gene>
<evidence type="ECO:0000250" key="1"/>
<evidence type="ECO:0000255" key="2"/>
<evidence type="ECO:0000256" key="3">
    <source>
        <dbReference type="SAM" id="MobiDB-lite"/>
    </source>
</evidence>
<evidence type="ECO:0000269" key="4">
    <source>
    </source>
</evidence>
<evidence type="ECO:0000305" key="5"/>
<evidence type="ECO:0007744" key="6">
    <source>
    </source>
</evidence>
<protein>
    <recommendedName>
        <fullName>Centrosomal protein CEP57L1</fullName>
    </recommendedName>
    <alternativeName>
        <fullName>Centrosomal protein 57kDa-like protein 1</fullName>
    </alternativeName>
    <alternativeName>
        <fullName>Centrosomal protein of 57 kDa-related protein</fullName>
        <shortName>Cep57R</shortName>
    </alternativeName>
    <alternativeName>
        <fullName>Cep57-related protein</fullName>
    </alternativeName>
</protein>
<organism>
    <name type="scientific">Homo sapiens</name>
    <name type="common">Human</name>
    <dbReference type="NCBI Taxonomy" id="9606"/>
    <lineage>
        <taxon>Eukaryota</taxon>
        <taxon>Metazoa</taxon>
        <taxon>Chordata</taxon>
        <taxon>Craniata</taxon>
        <taxon>Vertebrata</taxon>
        <taxon>Euteleostomi</taxon>
        <taxon>Mammalia</taxon>
        <taxon>Eutheria</taxon>
        <taxon>Euarchontoglires</taxon>
        <taxon>Primates</taxon>
        <taxon>Haplorrhini</taxon>
        <taxon>Catarrhini</taxon>
        <taxon>Hominidae</taxon>
        <taxon>Homo</taxon>
    </lineage>
</organism>
<accession>Q8IYX8</accession>
<accession>G5E992</accession>
<dbReference type="EMBL" id="AL355305">
    <property type="status" value="NOT_ANNOTATED_CDS"/>
    <property type="molecule type" value="Genomic_DNA"/>
</dbReference>
<dbReference type="EMBL" id="CH471051">
    <property type="protein sequence ID" value="EAW48364.1"/>
    <property type="molecule type" value="Genomic_DNA"/>
</dbReference>
<dbReference type="EMBL" id="BC033448">
    <property type="protein sequence ID" value="AAH33448.1"/>
    <property type="molecule type" value="mRNA"/>
</dbReference>
<dbReference type="CCDS" id="CCDS5071.1">
    <molecule id="Q8IYX8-1"/>
</dbReference>
<dbReference type="CCDS" id="CCDS64491.1">
    <molecule id="Q8IYX8-2"/>
</dbReference>
<dbReference type="RefSeq" id="NP_001077004.1">
    <molecule id="Q8IYX8-1"/>
    <property type="nucleotide sequence ID" value="NM_001083535.3"/>
</dbReference>
<dbReference type="RefSeq" id="NP_001258781.1">
    <molecule id="Q8IYX8-1"/>
    <property type="nucleotide sequence ID" value="NM_001271852.3"/>
</dbReference>
<dbReference type="RefSeq" id="NP_001258782.1">
    <molecule id="Q8IYX8-2"/>
    <property type="nucleotide sequence ID" value="NM_001271853.3"/>
</dbReference>
<dbReference type="RefSeq" id="NP_001337581.1">
    <molecule id="Q8IYX8-1"/>
    <property type="nucleotide sequence ID" value="NM_001350652.2"/>
</dbReference>
<dbReference type="RefSeq" id="NP_001337582.1">
    <molecule id="Q8IYX8-1"/>
    <property type="nucleotide sequence ID" value="NM_001350653.2"/>
</dbReference>
<dbReference type="RefSeq" id="NP_776191.1">
    <molecule id="Q8IYX8-1"/>
    <property type="nucleotide sequence ID" value="NM_173830.6"/>
</dbReference>
<dbReference type="RefSeq" id="XP_016866259.1">
    <property type="nucleotide sequence ID" value="XM_017010770.1"/>
</dbReference>
<dbReference type="SMR" id="Q8IYX8"/>
<dbReference type="BioGRID" id="130198">
    <property type="interactions" value="95"/>
</dbReference>
<dbReference type="FunCoup" id="Q8IYX8">
    <property type="interactions" value="162"/>
</dbReference>
<dbReference type="IntAct" id="Q8IYX8">
    <property type="interactions" value="93"/>
</dbReference>
<dbReference type="MINT" id="Q8IYX8"/>
<dbReference type="STRING" id="9606.ENSP00000357966"/>
<dbReference type="iPTMnet" id="Q8IYX8"/>
<dbReference type="PhosphoSitePlus" id="Q8IYX8"/>
<dbReference type="BioMuta" id="CEP57L1"/>
<dbReference type="jPOST" id="Q8IYX8"/>
<dbReference type="MassIVE" id="Q8IYX8"/>
<dbReference type="PaxDb" id="9606-ENSP00000427844"/>
<dbReference type="PeptideAtlas" id="Q8IYX8"/>
<dbReference type="ProteomicsDB" id="33869"/>
<dbReference type="ProteomicsDB" id="71260">
    <molecule id="Q8IYX8-1"/>
</dbReference>
<dbReference type="Pumba" id="Q8IYX8"/>
<dbReference type="Antibodypedia" id="46535">
    <property type="antibodies" value="110 antibodies from 22 providers"/>
</dbReference>
<dbReference type="DNASU" id="285753"/>
<dbReference type="Ensembl" id="ENST00000359793.7">
    <molecule id="Q8IYX8-1"/>
    <property type="protein sequence ID" value="ENSP00000352841.3"/>
    <property type="gene ID" value="ENSG00000183137.16"/>
</dbReference>
<dbReference type="Ensembl" id="ENST00000368968.6">
    <molecule id="Q8IYX8-2"/>
    <property type="protein sequence ID" value="ENSP00000357964.2"/>
    <property type="gene ID" value="ENSG00000183137.16"/>
</dbReference>
<dbReference type="Ensembl" id="ENST00000517392.6">
    <molecule id="Q8IYX8-1"/>
    <property type="protein sequence ID" value="ENSP00000427844.1"/>
    <property type="gene ID" value="ENSG00000183137.16"/>
</dbReference>
<dbReference type="GeneID" id="285753"/>
<dbReference type="KEGG" id="hsa:285753"/>
<dbReference type="MANE-Select" id="ENST00000517392.6">
    <property type="protein sequence ID" value="ENSP00000427844.1"/>
    <property type="RefSeq nucleotide sequence ID" value="NM_001271852.3"/>
    <property type="RefSeq protein sequence ID" value="NP_001258781.1"/>
</dbReference>
<dbReference type="UCSC" id="uc003psx.5">
    <molecule id="Q8IYX8-1"/>
    <property type="organism name" value="human"/>
</dbReference>
<dbReference type="AGR" id="HGNC:21561"/>
<dbReference type="CTD" id="285753"/>
<dbReference type="DisGeNET" id="285753"/>
<dbReference type="GeneCards" id="CEP57L1"/>
<dbReference type="HGNC" id="HGNC:21561">
    <property type="gene designation" value="CEP57L1"/>
</dbReference>
<dbReference type="HPA" id="ENSG00000183137">
    <property type="expression patterns" value="Low tissue specificity"/>
</dbReference>
<dbReference type="neXtProt" id="NX_Q8IYX8"/>
<dbReference type="OpenTargets" id="ENSG00000183137"/>
<dbReference type="PharmGKB" id="PA134980921"/>
<dbReference type="VEuPathDB" id="HostDB:ENSG00000183137"/>
<dbReference type="eggNOG" id="ENOG502QTVF">
    <property type="taxonomic scope" value="Eukaryota"/>
</dbReference>
<dbReference type="GeneTree" id="ENSGT00530000063695"/>
<dbReference type="InParanoid" id="Q8IYX8"/>
<dbReference type="OrthoDB" id="76453at2759"/>
<dbReference type="PAN-GO" id="Q8IYX8">
    <property type="GO annotations" value="2 GO annotations based on evolutionary models"/>
</dbReference>
<dbReference type="PhylomeDB" id="Q8IYX8"/>
<dbReference type="TreeFam" id="TF329178"/>
<dbReference type="PathwayCommons" id="Q8IYX8"/>
<dbReference type="SignaLink" id="Q8IYX8"/>
<dbReference type="BioGRID-ORCS" id="285753">
    <property type="hits" value="18 hits in 1149 CRISPR screens"/>
</dbReference>
<dbReference type="ChiTaRS" id="CEP57L1">
    <property type="organism name" value="human"/>
</dbReference>
<dbReference type="GenomeRNAi" id="285753"/>
<dbReference type="Pharos" id="Q8IYX8">
    <property type="development level" value="Tdark"/>
</dbReference>
<dbReference type="PRO" id="PR:Q8IYX8"/>
<dbReference type="Proteomes" id="UP000005640">
    <property type="component" value="Chromosome 6"/>
</dbReference>
<dbReference type="RNAct" id="Q8IYX8">
    <property type="molecule type" value="protein"/>
</dbReference>
<dbReference type="Bgee" id="ENSG00000183137">
    <property type="expression patterns" value="Expressed in buccal mucosa cell and 107 other cell types or tissues"/>
</dbReference>
<dbReference type="ExpressionAtlas" id="Q8IYX8">
    <property type="expression patterns" value="baseline and differential"/>
</dbReference>
<dbReference type="GO" id="GO:0005813">
    <property type="term" value="C:centrosome"/>
    <property type="evidence" value="ECO:0000318"/>
    <property type="project" value="GO_Central"/>
</dbReference>
<dbReference type="GO" id="GO:0005737">
    <property type="term" value="C:cytoplasm"/>
    <property type="evidence" value="ECO:0007669"/>
    <property type="project" value="UniProtKB-KW"/>
</dbReference>
<dbReference type="GO" id="GO:0005874">
    <property type="term" value="C:microtubule"/>
    <property type="evidence" value="ECO:0007669"/>
    <property type="project" value="UniProtKB-KW"/>
</dbReference>
<dbReference type="GO" id="GO:0043015">
    <property type="term" value="F:gamma-tubulin binding"/>
    <property type="evidence" value="ECO:0007669"/>
    <property type="project" value="InterPro"/>
</dbReference>
<dbReference type="GO" id="GO:0042802">
    <property type="term" value="F:identical protein binding"/>
    <property type="evidence" value="ECO:0000353"/>
    <property type="project" value="IntAct"/>
</dbReference>
<dbReference type="GO" id="GO:0008017">
    <property type="term" value="F:microtubule binding"/>
    <property type="evidence" value="ECO:0000318"/>
    <property type="project" value="GO_Central"/>
</dbReference>
<dbReference type="FunFam" id="1.20.58.90:FF:000005">
    <property type="entry name" value="centrosomal protein CEP57L1 isoform X2"/>
    <property type="match status" value="1"/>
</dbReference>
<dbReference type="Gene3D" id="1.20.58.90">
    <property type="match status" value="1"/>
</dbReference>
<dbReference type="InterPro" id="IPR051756">
    <property type="entry name" value="Centrosomal_MT-associated"/>
</dbReference>
<dbReference type="InterPro" id="IPR025913">
    <property type="entry name" value="Cep57_CLD"/>
</dbReference>
<dbReference type="InterPro" id="IPR024957">
    <property type="entry name" value="Cep57_MT-bd_dom"/>
</dbReference>
<dbReference type="PANTHER" id="PTHR19336:SF10">
    <property type="entry name" value="CENTROSOMAL PROTEIN CEP57L1"/>
    <property type="match status" value="1"/>
</dbReference>
<dbReference type="PANTHER" id="PTHR19336">
    <property type="entry name" value="UNCHARACTERIZED DUF1167"/>
    <property type="match status" value="1"/>
</dbReference>
<dbReference type="Pfam" id="PF14073">
    <property type="entry name" value="Cep57_CLD"/>
    <property type="match status" value="1"/>
</dbReference>
<dbReference type="Pfam" id="PF06657">
    <property type="entry name" value="Cep57_MT_bd"/>
    <property type="match status" value="1"/>
</dbReference>
<feature type="chain" id="PRO_0000189534" description="Centrosomal protein CEP57L1">
    <location>
        <begin position="1"/>
        <end position="460"/>
    </location>
</feature>
<feature type="region of interest" description="Disordered" evidence="3">
    <location>
        <begin position="399"/>
        <end position="423"/>
    </location>
</feature>
<feature type="coiled-coil region" evidence="2">
    <location>
        <begin position="51"/>
        <end position="228"/>
    </location>
</feature>
<feature type="coiled-coil region" evidence="2">
    <location>
        <begin position="317"/>
        <end position="384"/>
    </location>
</feature>
<feature type="compositionally biased region" description="Polar residues" evidence="3">
    <location>
        <begin position="399"/>
        <end position="410"/>
    </location>
</feature>
<feature type="modified residue" description="Phosphoserine" evidence="6">
    <location>
        <position position="49"/>
    </location>
</feature>
<feature type="splice variant" id="VSP_055660" description="In isoform 2." evidence="5">
    <original>CKL</original>
    <variation>RRL</variation>
    <location>
        <begin position="389"/>
        <end position="391"/>
    </location>
</feature>
<feature type="splice variant" id="VSP_055661" description="In isoform 2." evidence="5">
    <location>
        <begin position="392"/>
        <end position="460"/>
    </location>
</feature>
<feature type="sequence variant" id="VAR_052396" description="In dbSNP:rs351733.">
    <original>D</original>
    <variation>E</variation>
    <location>
        <position position="194"/>
    </location>
</feature>
<proteinExistence type="evidence at protein level"/>
<keyword id="KW-0025">Alternative splicing</keyword>
<keyword id="KW-0175">Coiled coil</keyword>
<keyword id="KW-0963">Cytoplasm</keyword>
<keyword id="KW-0206">Cytoskeleton</keyword>
<keyword id="KW-0493">Microtubule</keyword>
<keyword id="KW-0597">Phosphoprotein</keyword>
<keyword id="KW-1267">Proteomics identification</keyword>
<keyword id="KW-1185">Reference proteome</keyword>
<name>CE57L_HUMAN</name>
<comment type="function">
    <text evidence="1">Centrosomal protein which may be required for microtubule attachment to centrosomes.</text>
</comment>
<comment type="interaction">
    <interactant intactId="EBI-1104570">
        <id>Q8IYX8</id>
    </interactant>
    <interactant intactId="EBI-739580">
        <id>Q13137</id>
        <label>CALCOCO2</label>
    </interactant>
    <organismsDiffer>false</organismsDiffer>
    <experiments>3</experiments>
</comment>
<comment type="interaction">
    <interactant intactId="EBI-1104570">
        <id>Q8IYX8</id>
    </interactant>
    <interactant intactId="EBI-10171416">
        <id>Q96JN2-2</id>
        <label>CCDC136</label>
    </interactant>
    <organismsDiffer>false</organismsDiffer>
    <experiments>3</experiments>
</comment>
<comment type="interaction">
    <interactant intactId="EBI-1104570">
        <id>Q8IYX8</id>
    </interactant>
    <interactant intactId="EBI-747776">
        <id>Q53EZ4</id>
        <label>CEP55</label>
    </interactant>
    <organismsDiffer>false</organismsDiffer>
    <experiments>4</experiments>
</comment>
<comment type="interaction">
    <interactant intactId="EBI-1104570">
        <id>Q8IYX8</id>
    </interactant>
    <interactant intactId="EBI-1104570">
        <id>Q8IYX8</id>
        <label>CEP57L1</label>
    </interactant>
    <organismsDiffer>false</organismsDiffer>
    <experiments>4</experiments>
</comment>
<comment type="interaction">
    <interactant intactId="EBI-1104570">
        <id>Q8IYX8</id>
    </interactant>
    <interactant intactId="EBI-10181988">
        <id>Q8IYX8-2</id>
        <label>CEP57L1</label>
    </interactant>
    <organismsDiffer>false</organismsDiffer>
    <experiments>3</experiments>
</comment>
<comment type="interaction">
    <interactant intactId="EBI-1104570">
        <id>Q8IYX8</id>
    </interactant>
    <interactant intactId="EBI-741977">
        <id>Q96MT8</id>
        <label>CEP63</label>
    </interactant>
    <organismsDiffer>false</organismsDiffer>
    <experiments>3</experiments>
</comment>
<comment type="interaction">
    <interactant intactId="EBI-1104570">
        <id>Q8IYX8</id>
    </interactant>
    <interactant intactId="EBI-739624">
        <id>Q8NHQ1</id>
        <label>CEP70</label>
    </interactant>
    <organismsDiffer>false</organismsDiffer>
    <experiments>3</experiments>
</comment>
<comment type="interaction">
    <interactant intactId="EBI-1104570">
        <id>Q8IYX8</id>
    </interactant>
    <interactant intactId="EBI-739789">
        <id>Q92997</id>
        <label>DVL3</label>
    </interactant>
    <organismsDiffer>false</organismsDiffer>
    <experiments>3</experiments>
</comment>
<comment type="interaction">
    <interactant intactId="EBI-1104570">
        <id>Q8IYX8</id>
    </interactant>
    <interactant intactId="EBI-618309">
        <id>Q08379</id>
        <label>GOLGA2</label>
    </interactant>
    <organismsDiffer>false</organismsDiffer>
    <experiments>6</experiments>
</comment>
<comment type="interaction">
    <interactant intactId="EBI-1104570">
        <id>Q8IYX8</id>
    </interactant>
    <interactant intactId="EBI-717919">
        <id>Q4V328</id>
        <label>GRIPAP1</label>
    </interactant>
    <organismsDiffer>false</organismsDiffer>
    <experiments>6</experiments>
</comment>
<comment type="interaction">
    <interactant intactId="EBI-1104570">
        <id>Q8IYX8</id>
    </interactant>
    <interactant intactId="EBI-12035052">
        <id>A5PKX9</id>
        <label>INADL</label>
    </interactant>
    <organismsDiffer>false</organismsDiffer>
    <experiments>3</experiments>
</comment>
<comment type="interaction">
    <interactant intactId="EBI-1104570">
        <id>Q8IYX8</id>
    </interactant>
    <interactant intactId="EBI-743591">
        <id>Q9BW62</id>
        <label>KATNAL1</label>
    </interactant>
    <organismsDiffer>false</organismsDiffer>
    <experiments>9</experiments>
</comment>
<comment type="interaction">
    <interactant intactId="EBI-1104570">
        <id>Q8IYX8</id>
    </interactant>
    <interactant intactId="EBI-948001">
        <id>Q15323</id>
        <label>KRT31</label>
    </interactant>
    <organismsDiffer>false</organismsDiffer>
    <experiments>3</experiments>
</comment>
<comment type="interaction">
    <interactant intactId="EBI-1104570">
        <id>Q8IYX8</id>
    </interactant>
    <interactant intactId="EBI-10171697">
        <id>Q6A162</id>
        <label>KRT40</label>
    </interactant>
    <organismsDiffer>false</organismsDiffer>
    <experiments>3</experiments>
</comment>
<comment type="interaction">
    <interactant intactId="EBI-1104570">
        <id>Q8IYX8</id>
    </interactant>
    <interactant intactId="EBI-8639312">
        <id>P25800</id>
        <label>LMO1</label>
    </interactant>
    <organismsDiffer>false</organismsDiffer>
    <experiments>3</experiments>
</comment>
<comment type="interaction">
    <interactant intactId="EBI-1104570">
        <id>Q8IYX8</id>
    </interactant>
    <interactant intactId="EBI-741037">
        <id>Q9BRK4</id>
        <label>LZTS2</label>
    </interactant>
    <organismsDiffer>false</organismsDiffer>
    <experiments>3</experiments>
</comment>
<comment type="interaction">
    <interactant intactId="EBI-1104570">
        <id>Q8IYX8</id>
    </interactant>
    <interactant intactId="EBI-307531">
        <id>P23508</id>
        <label>MCC</label>
    </interactant>
    <organismsDiffer>false</organismsDiffer>
    <experiments>3</experiments>
</comment>
<comment type="interaction">
    <interactant intactId="EBI-1104570">
        <id>Q8IYX8</id>
    </interactant>
    <interactant intactId="EBI-724076">
        <id>Q99750</id>
        <label>MDFI</label>
    </interactant>
    <organismsDiffer>false</organismsDiffer>
    <experiments>6</experiments>
</comment>
<comment type="interaction">
    <interactant intactId="EBI-1104570">
        <id>Q8IYX8</id>
    </interactant>
    <interactant intactId="EBI-1048159">
        <id>P55081</id>
        <label>MFAP1</label>
    </interactant>
    <organismsDiffer>false</organismsDiffer>
    <experiments>3</experiments>
</comment>
<comment type="interaction">
    <interactant intactId="EBI-1104570">
        <id>Q8IYX8</id>
    </interactant>
    <interactant intactId="EBI-10172526">
        <id>Q9UJV3-2</id>
        <label>MID2</label>
    </interactant>
    <organismsDiffer>false</organismsDiffer>
    <experiments>3</experiments>
</comment>
<comment type="interaction">
    <interactant intactId="EBI-1104570">
        <id>Q8IYX8</id>
    </interactant>
    <interactant intactId="EBI-742948">
        <id>Q5JR59</id>
        <label>MTUS2</label>
    </interactant>
    <organismsDiffer>false</organismsDiffer>
    <experiments>3</experiments>
</comment>
<comment type="interaction">
    <interactant intactId="EBI-1104570">
        <id>Q8IYX8</id>
    </interactant>
    <interactant intactId="EBI-79165">
        <id>Q9NRD5</id>
        <label>PICK1</label>
    </interactant>
    <organismsDiffer>false</organismsDiffer>
    <experiments>3</experiments>
</comment>
<comment type="interaction">
    <interactant intactId="EBI-1104570">
        <id>Q8IYX8</id>
    </interactant>
    <interactant intactId="EBI-10171633">
        <id>Q96PV4</id>
        <label>PNMA5</label>
    </interactant>
    <organismsDiffer>false</organismsDiffer>
    <experiments>3</experiments>
</comment>
<comment type="interaction">
    <interactant intactId="EBI-1104570">
        <id>Q8IYX8</id>
    </interactant>
    <interactant intactId="EBI-11320284">
        <id>Q9NQX0</id>
        <label>PRDM6</label>
    </interactant>
    <organismsDiffer>false</organismsDiffer>
    <experiments>3</experiments>
</comment>
<comment type="interaction">
    <interactant intactId="EBI-1104570">
        <id>Q8IYX8</id>
    </interactant>
    <interactant intactId="EBI-1760638">
        <id>Q92966</id>
        <label>SNAPC3</label>
    </interactant>
    <organismsDiffer>false</organismsDiffer>
    <experiments>3</experiments>
</comment>
<comment type="interaction">
    <interactant intactId="EBI-1104570">
        <id>Q8IYX8</id>
    </interactant>
    <interactant intactId="EBI-1105213">
        <id>Q9UBB9</id>
        <label>TFIP11</label>
    </interactant>
    <organismsDiffer>false</organismsDiffer>
    <experiments>3</experiments>
</comment>
<comment type="interaction">
    <interactant intactId="EBI-1104570">
        <id>Q8IYX8</id>
    </interactant>
    <interactant intactId="EBI-359793">
        <id>P40222</id>
        <label>TXLNA</label>
    </interactant>
    <organismsDiffer>false</organismsDiffer>
    <experiments>3</experiments>
</comment>
<comment type="interaction">
    <interactant intactId="EBI-1104570">
        <id>Q8IYX8</id>
    </interactant>
    <interactant intactId="EBI-6116822">
        <id>Q8N3L3</id>
        <label>TXLNB</label>
    </interactant>
    <organismsDiffer>false</organismsDiffer>
    <experiments>3</experiments>
</comment>
<comment type="interaction">
    <interactant intactId="EBI-1104570">
        <id>Q8IYX8</id>
    </interactant>
    <interactant intactId="EBI-515331">
        <id>P07947</id>
        <label>YES1</label>
    </interactant>
    <organismsDiffer>false</organismsDiffer>
    <experiments>3</experiments>
</comment>
<comment type="interaction">
    <interactant intactId="EBI-1104570">
        <id>Q8IYX8</id>
    </interactant>
    <interactant intactId="EBI-10172590">
        <id>Q7Z3I7</id>
        <label>ZNF572</label>
    </interactant>
    <organismsDiffer>false</organismsDiffer>
    <experiments>4</experiments>
</comment>
<comment type="interaction">
    <interactant intactId="EBI-1104570">
        <id>Q8IYX8</id>
    </interactant>
    <interactant intactId="EBI-625509">
        <id>Q8N720</id>
        <label>ZNF655</label>
    </interactant>
    <organismsDiffer>false</organismsDiffer>
    <experiments>3</experiments>
</comment>
<comment type="interaction">
    <interactant intactId="EBI-1104570">
        <id>Q8IYX8</id>
    </interactant>
    <interactant intactId="EBI-25492388">
        <id>PRO_0000449621</id>
        <label>rep</label>
        <dbReference type="UniProtKB" id="P0DTD1"/>
    </interactant>
    <organismsDiffer>true</organismsDiffer>
    <experiments>4</experiments>
</comment>
<comment type="interaction">
    <interactant intactId="EBI-10181988">
        <id>Q8IYX8-2</id>
    </interactant>
    <interactant intactId="EBI-79934">
        <id>P09917</id>
        <label>ALOX5</label>
    </interactant>
    <organismsDiffer>false</organismsDiffer>
    <experiments>3</experiments>
</comment>
<comment type="interaction">
    <interactant intactId="EBI-10181988">
        <id>Q8IYX8-2</id>
    </interactant>
    <interactant intactId="EBI-541426">
        <id>Q9BXS5</id>
        <label>AP1M1</label>
    </interactant>
    <organismsDiffer>false</organismsDiffer>
    <experiments>3</experiments>
</comment>
<comment type="interaction">
    <interactant intactId="EBI-10181988">
        <id>Q8IYX8-2</id>
    </interactant>
    <interactant intactId="EBI-358049">
        <id>Q13895</id>
        <label>BYSL</label>
    </interactant>
    <organismsDiffer>false</organismsDiffer>
    <experiments>5</experiments>
</comment>
<comment type="interaction">
    <interactant intactId="EBI-10181988">
        <id>Q8IYX8-2</id>
    </interactant>
    <interactant intactId="EBI-751319">
        <id>Q9H257</id>
        <label>CARD9</label>
    </interactant>
    <organismsDiffer>false</organismsDiffer>
    <experiments>3</experiments>
</comment>
<comment type="interaction">
    <interactant intactId="EBI-10181988">
        <id>Q8IYX8-2</id>
    </interactant>
    <interactant intactId="EBI-741724">
        <id>Q8NA61</id>
        <label>CBY2</label>
    </interactant>
    <organismsDiffer>false</organismsDiffer>
    <experiments>3</experiments>
</comment>
<comment type="interaction">
    <interactant intactId="EBI-10181988">
        <id>Q8IYX8-2</id>
    </interactant>
    <interactant intactId="EBI-10171570">
        <id>Q68D86</id>
        <label>CCDC102B</label>
    </interactant>
    <organismsDiffer>false</organismsDiffer>
    <experiments>3</experiments>
</comment>
<comment type="interaction">
    <interactant intactId="EBI-10181988">
        <id>Q8IYX8-2</id>
    </interactant>
    <interactant intactId="EBI-10171416">
        <id>Q96JN2-2</id>
        <label>CCDC136</label>
    </interactant>
    <organismsDiffer>false</organismsDiffer>
    <experiments>3</experiments>
</comment>
<comment type="interaction">
    <interactant intactId="EBI-10181988">
        <id>Q8IYX8-2</id>
    </interactant>
    <interactant intactId="EBI-2808286">
        <id>Q2TAC2</id>
        <label>CCDC57</label>
    </interactant>
    <organismsDiffer>false</organismsDiffer>
    <experiments>3</experiments>
</comment>
<comment type="interaction">
    <interactant intactId="EBI-10181988">
        <id>Q8IYX8-2</id>
    </interactant>
    <interactant intactId="EBI-1181367">
        <id>Q01850</id>
        <label>CDR2</label>
    </interactant>
    <organismsDiffer>false</organismsDiffer>
    <experiments>3</experiments>
</comment>
<comment type="interaction">
    <interactant intactId="EBI-10181988">
        <id>Q8IYX8-2</id>
    </interactant>
    <interactant intactId="EBI-744115">
        <id>Q9C0F1</id>
        <label>CEP44</label>
    </interactant>
    <organismsDiffer>false</organismsDiffer>
    <experiments>3</experiments>
</comment>
<comment type="interaction">
    <interactant intactId="EBI-10181988">
        <id>Q8IYX8-2</id>
    </interactant>
    <interactant intactId="EBI-747776">
        <id>Q53EZ4</id>
        <label>CEP55</label>
    </interactant>
    <organismsDiffer>false</organismsDiffer>
    <experiments>3</experiments>
</comment>
<comment type="interaction">
    <interactant intactId="EBI-10181988">
        <id>Q8IYX8-2</id>
    </interactant>
    <interactant intactId="EBI-741977">
        <id>Q96MT8</id>
        <label>CEP63</label>
    </interactant>
    <organismsDiffer>false</organismsDiffer>
    <experiments>3</experiments>
</comment>
<comment type="interaction">
    <interactant intactId="EBI-10181988">
        <id>Q8IYX8-2</id>
    </interactant>
    <interactant intactId="EBI-739624">
        <id>Q8NHQ1</id>
        <label>CEP70</label>
    </interactant>
    <organismsDiffer>false</organismsDiffer>
    <experiments>3</experiments>
</comment>
<comment type="interaction">
    <interactant intactId="EBI-10181988">
        <id>Q8IYX8-2</id>
    </interactant>
    <interactant intactId="EBI-749051">
        <id>Q8IYR0</id>
        <label>CFAP206</label>
    </interactant>
    <organismsDiffer>false</organismsDiffer>
    <experiments>3</experiments>
</comment>
<comment type="interaction">
    <interactant intactId="EBI-10181988">
        <id>Q8IYX8-2</id>
    </interactant>
    <interactant intactId="EBI-740680">
        <id>Q8WWB3</id>
        <label>DYDC1</label>
    </interactant>
    <organismsDiffer>false</organismsDiffer>
    <experiments>3</experiments>
</comment>
<comment type="interaction">
    <interactant intactId="EBI-10181988">
        <id>Q8IYX8-2</id>
    </interactant>
    <interactant intactId="EBI-742350">
        <id>Q14241</id>
        <label>ELOA</label>
    </interactant>
    <organismsDiffer>false</organismsDiffer>
    <experiments>3</experiments>
</comment>
<comment type="interaction">
    <interactant intactId="EBI-10181988">
        <id>Q8IYX8-2</id>
    </interactant>
    <interactant intactId="EBI-742102">
        <id>Q8IYI6</id>
        <label>EXOC8</label>
    </interactant>
    <organismsDiffer>false</organismsDiffer>
    <experiments>3</experiments>
</comment>
<comment type="interaction">
    <interactant intactId="EBI-10181988">
        <id>Q8IYX8-2</id>
    </interactant>
    <interactant intactId="EBI-719941">
        <id>Q3B820</id>
        <label>FAM161A</label>
    </interactant>
    <organismsDiffer>false</organismsDiffer>
    <experiments>3</experiments>
</comment>
<comment type="interaction">
    <interactant intactId="EBI-10181988">
        <id>Q8IYX8-2</id>
    </interactant>
    <interactant intactId="EBI-10175124">
        <id>Q8IZU0</id>
        <label>FAM9B</label>
    </interactant>
    <organismsDiffer>false</organismsDiffer>
    <experiments>3</experiments>
</comment>
<comment type="interaction">
    <interactant intactId="EBI-10181988">
        <id>Q8IYX8-2</id>
    </interactant>
    <interactant intactId="EBI-448202">
        <id>O95257</id>
        <label>GADD45G</label>
    </interactant>
    <organismsDiffer>false</organismsDiffer>
    <experiments>3</experiments>
</comment>
<comment type="interaction">
    <interactant intactId="EBI-10181988">
        <id>Q8IYX8-2</id>
    </interactant>
    <interactant intactId="EBI-6164177">
        <id>Q92805</id>
        <label>GOLGA1</label>
    </interactant>
    <organismsDiffer>false</organismsDiffer>
    <experiments>3</experiments>
</comment>
<comment type="interaction">
    <interactant intactId="EBI-10181988">
        <id>Q8IYX8-2</id>
    </interactant>
    <interactant intactId="EBI-618309">
        <id>Q08379</id>
        <label>GOLGA2</label>
    </interactant>
    <organismsDiffer>false</organismsDiffer>
    <experiments>3</experiments>
</comment>
<comment type="interaction">
    <interactant intactId="EBI-10181988">
        <id>Q8IYX8-2</id>
    </interactant>
    <interactant intactId="EBI-2514791">
        <id>Q96CS2</id>
        <label>HAUS1</label>
    </interactant>
    <organismsDiffer>false</organismsDiffer>
    <experiments>3</experiments>
</comment>
<comment type="interaction">
    <interactant intactId="EBI-10181988">
        <id>Q8IYX8-2</id>
    </interactant>
    <interactant intactId="EBI-750003">
        <id>Q8N4P3</id>
        <label>HDDC3</label>
    </interactant>
    <organismsDiffer>false</organismsDiffer>
    <experiments>3</experiments>
</comment>
<comment type="interaction">
    <interactant intactId="EBI-10181988">
        <id>Q8IYX8-2</id>
    </interactant>
    <interactant intactId="EBI-740220">
        <id>O14964</id>
        <label>HGS</label>
    </interactant>
    <organismsDiffer>false</organismsDiffer>
    <experiments>3</experiments>
</comment>
<comment type="interaction">
    <interactant intactId="EBI-10181988">
        <id>Q8IYX8-2</id>
    </interactant>
    <interactant intactId="EBI-745305">
        <id>Q13422</id>
        <label>IKZF1</label>
    </interactant>
    <organismsDiffer>false</organismsDiffer>
    <experiments>3</experiments>
</comment>
<comment type="interaction">
    <interactant intactId="EBI-10181988">
        <id>Q8IYX8-2</id>
    </interactant>
    <interactant intactId="EBI-743591">
        <id>Q9BW62</id>
        <label>KATNAL1</label>
    </interactant>
    <organismsDiffer>false</organismsDiffer>
    <experiments>3</experiments>
</comment>
<comment type="interaction">
    <interactant intactId="EBI-10181988">
        <id>Q8IYX8-2</id>
    </interactant>
    <interactant intactId="EBI-2125614">
        <id>Q9BVG8</id>
        <label>KIFC3</label>
    </interactant>
    <organismsDiffer>false</organismsDiffer>
    <experiments>3</experiments>
</comment>
<comment type="interaction">
    <interactant intactId="EBI-10181988">
        <id>Q8IYX8-2</id>
    </interactant>
    <interactant intactId="EBI-1643885">
        <id>Q6P597</id>
        <label>KLC3</label>
    </interactant>
    <organismsDiffer>false</organismsDiffer>
    <experiments>3</experiments>
</comment>
<comment type="interaction">
    <interactant intactId="EBI-10181988">
        <id>Q8IYX8-2</id>
    </interactant>
    <interactant intactId="EBI-949319">
        <id>Q9NSK0</id>
        <label>KLC4</label>
    </interactant>
    <organismsDiffer>false</organismsDiffer>
    <experiments>3</experiments>
</comment>
<comment type="interaction">
    <interactant intactId="EBI-10181988">
        <id>Q8IYX8-2</id>
    </interactant>
    <interactant intactId="EBI-10171552">
        <id>A1A4E9</id>
        <label>KRT13</label>
    </interactant>
    <organismsDiffer>false</organismsDiffer>
    <experiments>3</experiments>
</comment>
<comment type="interaction">
    <interactant intactId="EBI-10181988">
        <id>Q8IYX8-2</id>
    </interactant>
    <interactant intactId="EBI-742756">
        <id>P08727</id>
        <label>KRT19</label>
    </interactant>
    <organismsDiffer>false</organismsDiffer>
    <experiments>3</experiments>
</comment>
<comment type="interaction">
    <interactant intactId="EBI-10181988">
        <id>Q8IYX8-2</id>
    </interactant>
    <interactant intactId="EBI-948001">
        <id>Q15323</id>
        <label>KRT31</label>
    </interactant>
    <organismsDiffer>false</organismsDiffer>
    <experiments>3</experiments>
</comment>
<comment type="interaction">
    <interactant intactId="EBI-10181988">
        <id>Q8IYX8-2</id>
    </interactant>
    <interactant intactId="EBI-1047263">
        <id>O76015</id>
        <label>KRT38</label>
    </interactant>
    <organismsDiffer>false</organismsDiffer>
    <experiments>3</experiments>
</comment>
<comment type="interaction">
    <interactant intactId="EBI-10181988">
        <id>Q8IYX8-2</id>
    </interactant>
    <interactant intactId="EBI-10171697">
        <id>Q6A162</id>
        <label>KRT40</label>
    </interactant>
    <organismsDiffer>false</organismsDiffer>
    <experiments>3</experiments>
</comment>
<comment type="interaction">
    <interactant intactId="EBI-10181988">
        <id>Q8IYX8-2</id>
    </interactant>
    <interactant intactId="EBI-726510">
        <id>Q96BZ8</id>
        <label>LENG1</label>
    </interactant>
    <organismsDiffer>false</organismsDiffer>
    <experiments>3</experiments>
</comment>
<comment type="interaction">
    <interactant intactId="EBI-10181988">
        <id>Q8IYX8-2</id>
    </interactant>
    <interactant intactId="EBI-742259">
        <id>Q8TAP4</id>
        <label>LMO3</label>
    </interactant>
    <organismsDiffer>false</organismsDiffer>
    <experiments>3</experiments>
</comment>
<comment type="interaction">
    <interactant intactId="EBI-10181988">
        <id>Q8IYX8-2</id>
    </interactant>
    <interactant intactId="EBI-741037">
        <id>Q9BRK4</id>
        <label>LZTS2</label>
    </interactant>
    <organismsDiffer>false</organismsDiffer>
    <experiments>3</experiments>
</comment>
<comment type="interaction">
    <interactant intactId="EBI-10181988">
        <id>Q8IYX8-2</id>
    </interactant>
    <interactant intactId="EBI-740978">
        <id>P43355</id>
        <label>MAGEA1</label>
    </interactant>
    <organismsDiffer>false</organismsDiffer>
    <experiments>3</experiments>
</comment>
<comment type="interaction">
    <interactant intactId="EBI-10181988">
        <id>Q8IYX8-2</id>
    </interactant>
    <interactant intactId="EBI-10239285">
        <id>Q96E03</id>
        <label>MAGEA2B</label>
    </interactant>
    <organismsDiffer>false</organismsDiffer>
    <experiments>3</experiments>
</comment>
<comment type="interaction">
    <interactant intactId="EBI-10181988">
        <id>Q8IYX8-2</id>
    </interactant>
    <interactant intactId="EBI-748397">
        <id>P50222</id>
        <label>MEOX2</label>
    </interactant>
    <organismsDiffer>false</organismsDiffer>
    <experiments>3</experiments>
</comment>
<comment type="interaction">
    <interactant intactId="EBI-10181988">
        <id>Q8IYX8-2</id>
    </interactant>
    <interactant intactId="EBI-1048159">
        <id>P55081</id>
        <label>MFAP1</label>
    </interactant>
    <organismsDiffer>false</organismsDiffer>
    <experiments>3</experiments>
</comment>
<comment type="interaction">
    <interactant intactId="EBI-10181988">
        <id>Q8IYX8-2</id>
    </interactant>
    <interactant intactId="EBI-10172526">
        <id>Q9UJV3-2</id>
        <label>MID2</label>
    </interactant>
    <organismsDiffer>false</organismsDiffer>
    <experiments>3</experiments>
</comment>
<comment type="interaction">
    <interactant intactId="EBI-10181988">
        <id>Q8IYX8-2</id>
    </interactant>
    <interactant intactId="EBI-399246">
        <id>Q9UBU8</id>
        <label>MORF4L1</label>
    </interactant>
    <organismsDiffer>false</organismsDiffer>
    <experiments>3</experiments>
</comment>
<comment type="interaction">
    <interactant intactId="EBI-10181988">
        <id>Q8IYX8-2</id>
    </interactant>
    <interactant intactId="EBI-742948">
        <id>Q5JR59</id>
        <label>MTUS2</label>
    </interactant>
    <organismsDiffer>false</organismsDiffer>
    <experiments>3</experiments>
</comment>
<comment type="interaction">
    <interactant intactId="EBI-10181988">
        <id>Q8IYX8-2</id>
    </interactant>
    <interactant intactId="EBI-347978">
        <id>P37198</id>
        <label>NUP62</label>
    </interactant>
    <organismsDiffer>false</organismsDiffer>
    <experiments>3</experiments>
</comment>
<comment type="interaction">
    <interactant intactId="EBI-10181988">
        <id>Q8IYX8-2</id>
    </interactant>
    <interactant intactId="EBI-602382">
        <id>Q16512</id>
        <label>PKN1</label>
    </interactant>
    <organismsDiffer>false</organismsDiffer>
    <experiments>3</experiments>
</comment>
<comment type="interaction">
    <interactant intactId="EBI-10181988">
        <id>Q8IYX8-2</id>
    </interactant>
    <interactant intactId="EBI-10171633">
        <id>Q96PV4</id>
        <label>PNMA5</label>
    </interactant>
    <organismsDiffer>false</organismsDiffer>
    <experiments>5</experiments>
</comment>
<comment type="interaction">
    <interactant intactId="EBI-10181988">
        <id>Q8IYX8-2</id>
    </interactant>
    <interactant intactId="EBI-368321">
        <id>O60437</id>
        <label>PPL</label>
    </interactant>
    <organismsDiffer>false</organismsDiffer>
    <experiments>3</experiments>
</comment>
<comment type="interaction">
    <interactant intactId="EBI-10181988">
        <id>Q8IYX8-2</id>
    </interactant>
    <interactant intactId="EBI-1055693">
        <id>O75771</id>
        <label>RAD51D</label>
    </interactant>
    <organismsDiffer>false</organismsDiffer>
    <experiments>3</experiments>
</comment>
<comment type="interaction">
    <interactant intactId="EBI-10181988">
        <id>Q8IYX8-2</id>
    </interactant>
    <interactant intactId="EBI-726876">
        <id>Q6NUQ1</id>
        <label>RINT1</label>
    </interactant>
    <organismsDiffer>false</organismsDiffer>
    <experiments>3</experiments>
</comment>
<comment type="interaction">
    <interactant intactId="EBI-10181988">
        <id>Q8IYX8-2</id>
    </interactant>
    <interactant intactId="EBI-1378139">
        <id>Q9HAT0</id>
        <label>ROPN1</label>
    </interactant>
    <organismsDiffer>false</organismsDiffer>
    <experiments>3</experiments>
</comment>
<comment type="interaction">
    <interactant intactId="EBI-10181988">
        <id>Q8IYX8-2</id>
    </interactant>
    <interactant intactId="EBI-10244848">
        <id>Q5SQN1</id>
        <label>SNAP47</label>
    </interactant>
    <organismsDiffer>false</organismsDiffer>
    <experiments>3</experiments>
</comment>
<comment type="interaction">
    <interactant intactId="EBI-10181988">
        <id>Q8IYX8-2</id>
    </interactant>
    <interactant intactId="EBI-1760638">
        <id>Q92966</id>
        <label>SNAPC3</label>
    </interactant>
    <organismsDiffer>false</organismsDiffer>
    <experiments>3</experiments>
</comment>
<comment type="interaction">
    <interactant intactId="EBI-10181988">
        <id>Q8IYX8-2</id>
    </interactant>
    <interactant intactId="EBI-359964">
        <id>Q8N5C8</id>
        <label>TAB3</label>
    </interactant>
    <organismsDiffer>false</organismsDiffer>
    <experiments>3</experiments>
</comment>
<comment type="interaction">
    <interactant intactId="EBI-10181988">
        <id>Q8IYX8-2</id>
    </interactant>
    <interactant intactId="EBI-355744">
        <id>Q12933</id>
        <label>TRAF2</label>
    </interactant>
    <organismsDiffer>false</organismsDiffer>
    <experiments>3</experiments>
</comment>
<comment type="interaction">
    <interactant intactId="EBI-10181988">
        <id>Q8IYX8-2</id>
    </interactant>
    <interactant intactId="EBI-747601">
        <id>Q9UL33</id>
        <label>TRAPPC2L</label>
    </interactant>
    <organismsDiffer>false</organismsDiffer>
    <experiments>3</experiments>
</comment>
<comment type="interaction">
    <interactant intactId="EBI-10181988">
        <id>Q8IYX8-2</id>
    </interactant>
    <interactant intactId="EBI-2130429">
        <id>Q9BYV2</id>
        <label>TRIM54</label>
    </interactant>
    <organismsDiffer>false</organismsDiffer>
    <experiments>3</experiments>
</comment>
<comment type="interaction">
    <interactant intactId="EBI-10181988">
        <id>Q8IYX8-2</id>
    </interactant>
    <interactant intactId="EBI-742327">
        <id>Q15654</id>
        <label>TRIP6</label>
    </interactant>
    <organismsDiffer>false</organismsDiffer>
    <experiments>3</experiments>
</comment>
<comment type="interaction">
    <interactant intactId="EBI-10181988">
        <id>Q8IYX8-2</id>
    </interactant>
    <interactant intactId="EBI-744794">
        <id>Q9BZW7</id>
        <label>TSGA10</label>
    </interactant>
    <organismsDiffer>false</organismsDiffer>
    <experiments>3</experiments>
</comment>
<comment type="interaction">
    <interactant intactId="EBI-10181988">
        <id>Q8IYX8-2</id>
    </interactant>
    <interactant intactId="EBI-359793">
        <id>P40222</id>
        <label>TXLNA</label>
    </interactant>
    <organismsDiffer>false</organismsDiffer>
    <experiments>3</experiments>
</comment>
<comment type="interaction">
    <interactant intactId="EBI-10181988">
        <id>Q8IYX8-2</id>
    </interactant>
    <interactant intactId="EBI-6116822">
        <id>Q8N3L3</id>
        <label>TXLNB</label>
    </interactant>
    <organismsDiffer>false</organismsDiffer>
    <experiments>3</experiments>
</comment>
<comment type="interaction">
    <interactant intactId="EBI-10181988">
        <id>Q8IYX8-2</id>
    </interactant>
    <interactant intactId="EBI-10249899">
        <id>Q9H614</id>
    </interactant>
    <organismsDiffer>false</organismsDiffer>
    <experiments>3</experiments>
</comment>
<comment type="subcellular location">
    <subcellularLocation>
        <location evidence="4">Cytoplasm</location>
        <location evidence="4">Cytoskeleton</location>
        <location evidence="4">Microtubule organizing center</location>
        <location evidence="4">Centrosome</location>
    </subcellularLocation>
</comment>
<comment type="alternative products">
    <event type="alternative splicing"/>
    <isoform>
        <id>Q8IYX8-1</id>
        <name>1</name>
        <sequence type="displayed"/>
    </isoform>
    <isoform>
        <id>Q8IYX8-2</id>
        <name>2</name>
        <sequence type="described" ref="VSP_055660 VSP_055661"/>
    </isoform>
</comment>
<comment type="similarity">
    <text evidence="5">Belongs to the translokin family.</text>
</comment>